<accession>Q9C5I3</accession>
<accession>Q9SGN4</accession>
<organism>
    <name type="scientific">Arabidopsis thaliana</name>
    <name type="common">Mouse-ear cress</name>
    <dbReference type="NCBI Taxonomy" id="3702"/>
    <lineage>
        <taxon>Eukaryota</taxon>
        <taxon>Viridiplantae</taxon>
        <taxon>Streptophyta</taxon>
        <taxon>Embryophyta</taxon>
        <taxon>Tracheophyta</taxon>
        <taxon>Spermatophyta</taxon>
        <taxon>Magnoliopsida</taxon>
        <taxon>eudicotyledons</taxon>
        <taxon>Gunneridae</taxon>
        <taxon>Pentapetalae</taxon>
        <taxon>rosids</taxon>
        <taxon>malvids</taxon>
        <taxon>Brassicales</taxon>
        <taxon>Brassicaceae</taxon>
        <taxon>Camelineae</taxon>
        <taxon>Arabidopsis</taxon>
    </lineage>
</organism>
<gene>
    <name type="primary">ERF11</name>
    <name type="synonym">ERF-11</name>
    <name type="synonym">ERF076</name>
    <name type="ordered locus">At1g28370</name>
    <name type="ORF">F3M18.20</name>
</gene>
<name>ERF76_ARATH</name>
<sequence>MAPTVKTAAVKTNEGNGVRYRGVRKRPWGRYAAEIRDPFKKSRVWLGTFDTPEEAARAYDKRAIEFRGAKAKTNFPCYNINAHCLSLTQSLSQSSTVESSFPNLNLGSDSVSSRFPFPKIQVKAGMMVFDERSESDSSSVVMDVVRYEGRRVVLDLDLNFPPPPEN</sequence>
<evidence type="ECO:0000250" key="1"/>
<evidence type="ECO:0000255" key="2">
    <source>
        <dbReference type="PROSITE-ProRule" id="PRU00366"/>
    </source>
</evidence>
<evidence type="ECO:0000269" key="3">
    <source>
    </source>
</evidence>
<evidence type="ECO:0000305" key="4"/>
<protein>
    <recommendedName>
        <fullName>Ethylene-responsive transcription factor 11</fullName>
        <shortName>AtERF11</shortName>
    </recommendedName>
    <alternativeName>
        <fullName>Ethylene-responsive element-binding factor 11</fullName>
        <shortName>EREBP-11</shortName>
    </alternativeName>
</protein>
<dbReference type="EMBL" id="AB055882">
    <property type="protein sequence ID" value="BAB62911.1"/>
    <property type="molecule type" value="Genomic_DNA"/>
</dbReference>
<dbReference type="EMBL" id="AC010155">
    <property type="protein sequence ID" value="AAF16756.1"/>
    <property type="status" value="ALT_INIT"/>
    <property type="molecule type" value="Genomic_DNA"/>
</dbReference>
<dbReference type="EMBL" id="CP002684">
    <property type="protein sequence ID" value="AEE30963.1"/>
    <property type="molecule type" value="Genomic_DNA"/>
</dbReference>
<dbReference type="EMBL" id="AF360232">
    <property type="protein sequence ID" value="AAK25942.1"/>
    <property type="molecule type" value="mRNA"/>
</dbReference>
<dbReference type="EMBL" id="AY040032">
    <property type="protein sequence ID" value="AAK64090.1"/>
    <property type="molecule type" value="mRNA"/>
</dbReference>
<dbReference type="EMBL" id="AY086783">
    <property type="protein sequence ID" value="AAM63833.1"/>
    <property type="molecule type" value="mRNA"/>
</dbReference>
<dbReference type="PIR" id="B86410">
    <property type="entry name" value="B86410"/>
</dbReference>
<dbReference type="RefSeq" id="NP_001319098.1">
    <property type="nucleotide sequence ID" value="NM_001332812.1"/>
</dbReference>
<dbReference type="RefSeq" id="NP_174159.2">
    <property type="nucleotide sequence ID" value="NM_102603.3"/>
</dbReference>
<dbReference type="SMR" id="Q9C5I3"/>
<dbReference type="BioGRID" id="24968">
    <property type="interactions" value="4"/>
</dbReference>
<dbReference type="FunCoup" id="Q9C5I3">
    <property type="interactions" value="1"/>
</dbReference>
<dbReference type="IntAct" id="Q9C5I3">
    <property type="interactions" value="2"/>
</dbReference>
<dbReference type="STRING" id="3702.Q9C5I3"/>
<dbReference type="PaxDb" id="3702-AT1G28370.1"/>
<dbReference type="EnsemblPlants" id="AT1G28370.1">
    <property type="protein sequence ID" value="AT1G28370.1"/>
    <property type="gene ID" value="AT1G28370"/>
</dbReference>
<dbReference type="GeneID" id="839733"/>
<dbReference type="Gramene" id="AT1G28370.1">
    <property type="protein sequence ID" value="AT1G28370.1"/>
    <property type="gene ID" value="AT1G28370"/>
</dbReference>
<dbReference type="KEGG" id="ath:AT1G28370"/>
<dbReference type="Araport" id="AT1G28370"/>
<dbReference type="TAIR" id="AT1G28370">
    <property type="gene designation" value="ERF11"/>
</dbReference>
<dbReference type="HOGENOM" id="CLU_042594_5_1_1"/>
<dbReference type="InParanoid" id="Q9C5I3"/>
<dbReference type="OMA" id="YRNAGAC"/>
<dbReference type="OrthoDB" id="1931494at2759"/>
<dbReference type="PhylomeDB" id="Q9C5I3"/>
<dbReference type="PRO" id="PR:Q9C5I3"/>
<dbReference type="Proteomes" id="UP000006548">
    <property type="component" value="Chromosome 1"/>
</dbReference>
<dbReference type="ExpressionAtlas" id="Q9C5I3">
    <property type="expression patterns" value="baseline and differential"/>
</dbReference>
<dbReference type="GO" id="GO:0005634">
    <property type="term" value="C:nucleus"/>
    <property type="evidence" value="ECO:0007669"/>
    <property type="project" value="UniProtKB-SubCell"/>
</dbReference>
<dbReference type="GO" id="GO:0003700">
    <property type="term" value="F:DNA-binding transcription factor activity"/>
    <property type="evidence" value="ECO:0000250"/>
    <property type="project" value="TAIR"/>
</dbReference>
<dbReference type="GO" id="GO:0000976">
    <property type="term" value="F:transcription cis-regulatory region binding"/>
    <property type="evidence" value="ECO:0000353"/>
    <property type="project" value="TAIR"/>
</dbReference>
<dbReference type="GO" id="GO:0051301">
    <property type="term" value="P:cell division"/>
    <property type="evidence" value="ECO:0000270"/>
    <property type="project" value="TAIR"/>
</dbReference>
<dbReference type="GO" id="GO:0009873">
    <property type="term" value="P:ethylene-activated signaling pathway"/>
    <property type="evidence" value="ECO:0000304"/>
    <property type="project" value="TAIR"/>
</dbReference>
<dbReference type="GO" id="GO:0010087">
    <property type="term" value="P:phloem or xylem histogenesis"/>
    <property type="evidence" value="ECO:0000270"/>
    <property type="project" value="TAIR"/>
</dbReference>
<dbReference type="CDD" id="cd00018">
    <property type="entry name" value="AP2"/>
    <property type="match status" value="1"/>
</dbReference>
<dbReference type="FunFam" id="3.30.730.10:FF:000001">
    <property type="entry name" value="Ethylene-responsive transcription factor 2"/>
    <property type="match status" value="1"/>
</dbReference>
<dbReference type="Gene3D" id="3.30.730.10">
    <property type="entry name" value="AP2/ERF domain"/>
    <property type="match status" value="1"/>
</dbReference>
<dbReference type="InterPro" id="IPR001471">
    <property type="entry name" value="AP2/ERF_dom"/>
</dbReference>
<dbReference type="InterPro" id="IPR036955">
    <property type="entry name" value="AP2/ERF_dom_sf"/>
</dbReference>
<dbReference type="InterPro" id="IPR016177">
    <property type="entry name" value="DNA-bd_dom_sf"/>
</dbReference>
<dbReference type="PANTHER" id="PTHR31677">
    <property type="entry name" value="AP2 DOMAIN CLASS TRANSCRIPTION FACTOR"/>
    <property type="match status" value="1"/>
</dbReference>
<dbReference type="PANTHER" id="PTHR31677:SF253">
    <property type="entry name" value="ETHYLENE-RESPONSIVE TRANSCRIPTION FACTOR 11"/>
    <property type="match status" value="1"/>
</dbReference>
<dbReference type="Pfam" id="PF00847">
    <property type="entry name" value="AP2"/>
    <property type="match status" value="1"/>
</dbReference>
<dbReference type="PRINTS" id="PR00367">
    <property type="entry name" value="ETHRSPELEMNT"/>
</dbReference>
<dbReference type="SMART" id="SM00380">
    <property type="entry name" value="AP2"/>
    <property type="match status" value="1"/>
</dbReference>
<dbReference type="SUPFAM" id="SSF54171">
    <property type="entry name" value="DNA-binding domain"/>
    <property type="match status" value="1"/>
</dbReference>
<dbReference type="PROSITE" id="PS51032">
    <property type="entry name" value="AP2_ERF"/>
    <property type="match status" value="1"/>
</dbReference>
<comment type="function">
    <text evidence="1 3">Involved in the regulation of gene expression by stress factors and by components of stress signal transduction pathways. Transcription factor that binds to the GCC-box pathogenesis-related promoter element. Acts as a transcriptional inhibitor and may regulate other AtERFs (By similarity).</text>
</comment>
<comment type="interaction">
    <interactant intactId="EBI-25523668">
        <id>Q9C5I3</id>
    </interactant>
    <interactant intactId="EBI-4426144">
        <id>Q9C9L2</id>
        <label>TCP15</label>
    </interactant>
    <organismsDiffer>false</organismsDiffer>
    <experiments>3</experiments>
</comment>
<comment type="interaction">
    <interactant intactId="EBI-25523668">
        <id>Q9C5I3</id>
    </interactant>
    <interactant intactId="EBI-25522447">
        <id>Q9MAH8</id>
        <label>TCP3</label>
    </interactant>
    <organismsDiffer>false</organismsDiffer>
    <experiments>3</experiments>
</comment>
<comment type="subcellular location">
    <subcellularLocation>
        <location evidence="4">Nucleus</location>
    </subcellularLocation>
</comment>
<comment type="domain">
    <text evidence="1">Contains a slightly degenerated ERF-associated amphiphilic repression (EAR) motif, which may be involved in the activity of transcriptional repression.</text>
</comment>
<comment type="similarity">
    <text evidence="4">Belongs to the AP2/ERF transcription factor family. ERF subfamily.</text>
</comment>
<comment type="sequence caution" evidence="4">
    <conflict type="erroneous initiation">
        <sequence resource="EMBL-CDS" id="AAF16756"/>
    </conflict>
</comment>
<reference key="1">
    <citation type="journal article" date="2001" name="Plant Cell">
        <title>Repression domains of class II ERF transcriptional repressors share an essential motif for active repression.</title>
        <authorList>
            <person name="Ohta M."/>
            <person name="Matsui K."/>
            <person name="Hiratsu K."/>
            <person name="Shinshi H."/>
            <person name="Ohme-Takagi M."/>
        </authorList>
    </citation>
    <scope>NUCLEOTIDE SEQUENCE [GENOMIC DNA]</scope>
    <scope>FUNCTION</scope>
</reference>
<reference key="2">
    <citation type="journal article" date="2000" name="Nature">
        <title>Sequence and analysis of chromosome 1 of the plant Arabidopsis thaliana.</title>
        <authorList>
            <person name="Theologis A."/>
            <person name="Ecker J.R."/>
            <person name="Palm C.J."/>
            <person name="Federspiel N.A."/>
            <person name="Kaul S."/>
            <person name="White O."/>
            <person name="Alonso J."/>
            <person name="Altafi H."/>
            <person name="Araujo R."/>
            <person name="Bowman C.L."/>
            <person name="Brooks S.Y."/>
            <person name="Buehler E."/>
            <person name="Chan A."/>
            <person name="Chao Q."/>
            <person name="Chen H."/>
            <person name="Cheuk R.F."/>
            <person name="Chin C.W."/>
            <person name="Chung M.K."/>
            <person name="Conn L."/>
            <person name="Conway A.B."/>
            <person name="Conway A.R."/>
            <person name="Creasy T.H."/>
            <person name="Dewar K."/>
            <person name="Dunn P."/>
            <person name="Etgu P."/>
            <person name="Feldblyum T.V."/>
            <person name="Feng J.-D."/>
            <person name="Fong B."/>
            <person name="Fujii C.Y."/>
            <person name="Gill J.E."/>
            <person name="Goldsmith A.D."/>
            <person name="Haas B."/>
            <person name="Hansen N.F."/>
            <person name="Hughes B."/>
            <person name="Huizar L."/>
            <person name="Hunter J.L."/>
            <person name="Jenkins J."/>
            <person name="Johnson-Hopson C."/>
            <person name="Khan S."/>
            <person name="Khaykin E."/>
            <person name="Kim C.J."/>
            <person name="Koo H.L."/>
            <person name="Kremenetskaia I."/>
            <person name="Kurtz D.B."/>
            <person name="Kwan A."/>
            <person name="Lam B."/>
            <person name="Langin-Hooper S."/>
            <person name="Lee A."/>
            <person name="Lee J.M."/>
            <person name="Lenz C.A."/>
            <person name="Li J.H."/>
            <person name="Li Y.-P."/>
            <person name="Lin X."/>
            <person name="Liu S.X."/>
            <person name="Liu Z.A."/>
            <person name="Luros J.S."/>
            <person name="Maiti R."/>
            <person name="Marziali A."/>
            <person name="Militscher J."/>
            <person name="Miranda M."/>
            <person name="Nguyen M."/>
            <person name="Nierman W.C."/>
            <person name="Osborne B.I."/>
            <person name="Pai G."/>
            <person name="Peterson J."/>
            <person name="Pham P.K."/>
            <person name="Rizzo M."/>
            <person name="Rooney T."/>
            <person name="Rowley D."/>
            <person name="Sakano H."/>
            <person name="Salzberg S.L."/>
            <person name="Schwartz J.R."/>
            <person name="Shinn P."/>
            <person name="Southwick A.M."/>
            <person name="Sun H."/>
            <person name="Tallon L.J."/>
            <person name="Tambunga G."/>
            <person name="Toriumi M.J."/>
            <person name="Town C.D."/>
            <person name="Utterback T."/>
            <person name="Van Aken S."/>
            <person name="Vaysberg M."/>
            <person name="Vysotskaia V.S."/>
            <person name="Walker M."/>
            <person name="Wu D."/>
            <person name="Yu G."/>
            <person name="Fraser C.M."/>
            <person name="Venter J.C."/>
            <person name="Davis R.W."/>
        </authorList>
    </citation>
    <scope>NUCLEOTIDE SEQUENCE [LARGE SCALE GENOMIC DNA]</scope>
    <source>
        <strain>cv. Columbia</strain>
    </source>
</reference>
<reference key="3">
    <citation type="journal article" date="2017" name="Plant J.">
        <title>Araport11: a complete reannotation of the Arabidopsis thaliana reference genome.</title>
        <authorList>
            <person name="Cheng C.Y."/>
            <person name="Krishnakumar V."/>
            <person name="Chan A.P."/>
            <person name="Thibaud-Nissen F."/>
            <person name="Schobel S."/>
            <person name="Town C.D."/>
        </authorList>
    </citation>
    <scope>GENOME REANNOTATION</scope>
    <source>
        <strain>cv. Columbia</strain>
    </source>
</reference>
<reference key="4">
    <citation type="journal article" date="2003" name="Science">
        <title>Empirical analysis of transcriptional activity in the Arabidopsis genome.</title>
        <authorList>
            <person name="Yamada K."/>
            <person name="Lim J."/>
            <person name="Dale J.M."/>
            <person name="Chen H."/>
            <person name="Shinn P."/>
            <person name="Palm C.J."/>
            <person name="Southwick A.M."/>
            <person name="Wu H.C."/>
            <person name="Kim C.J."/>
            <person name="Nguyen M."/>
            <person name="Pham P.K."/>
            <person name="Cheuk R.F."/>
            <person name="Karlin-Newmann G."/>
            <person name="Liu S.X."/>
            <person name="Lam B."/>
            <person name="Sakano H."/>
            <person name="Wu T."/>
            <person name="Yu G."/>
            <person name="Miranda M."/>
            <person name="Quach H.L."/>
            <person name="Tripp M."/>
            <person name="Chang C.H."/>
            <person name="Lee J.M."/>
            <person name="Toriumi M.J."/>
            <person name="Chan M.M."/>
            <person name="Tang C.C."/>
            <person name="Onodera C.S."/>
            <person name="Deng J.M."/>
            <person name="Akiyama K."/>
            <person name="Ansari Y."/>
            <person name="Arakawa T."/>
            <person name="Banh J."/>
            <person name="Banno F."/>
            <person name="Bowser L."/>
            <person name="Brooks S.Y."/>
            <person name="Carninci P."/>
            <person name="Chao Q."/>
            <person name="Choy N."/>
            <person name="Enju A."/>
            <person name="Goldsmith A.D."/>
            <person name="Gurjal M."/>
            <person name="Hansen N.F."/>
            <person name="Hayashizaki Y."/>
            <person name="Johnson-Hopson C."/>
            <person name="Hsuan V.W."/>
            <person name="Iida K."/>
            <person name="Karnes M."/>
            <person name="Khan S."/>
            <person name="Koesema E."/>
            <person name="Ishida J."/>
            <person name="Jiang P.X."/>
            <person name="Jones T."/>
            <person name="Kawai J."/>
            <person name="Kamiya A."/>
            <person name="Meyers C."/>
            <person name="Nakajima M."/>
            <person name="Narusaka M."/>
            <person name="Seki M."/>
            <person name="Sakurai T."/>
            <person name="Satou M."/>
            <person name="Tamse R."/>
            <person name="Vaysberg M."/>
            <person name="Wallender E.K."/>
            <person name="Wong C."/>
            <person name="Yamamura Y."/>
            <person name="Yuan S."/>
            <person name="Shinozaki K."/>
            <person name="Davis R.W."/>
            <person name="Theologis A."/>
            <person name="Ecker J.R."/>
        </authorList>
    </citation>
    <scope>NUCLEOTIDE SEQUENCE [LARGE SCALE MRNA]</scope>
    <source>
        <strain>cv. Columbia</strain>
    </source>
</reference>
<reference key="5">
    <citation type="submission" date="2002-03" db="EMBL/GenBank/DDBJ databases">
        <title>Full-length cDNA from Arabidopsis thaliana.</title>
        <authorList>
            <person name="Brover V.V."/>
            <person name="Troukhan M.E."/>
            <person name="Alexandrov N.A."/>
            <person name="Lu Y.-P."/>
            <person name="Flavell R.B."/>
            <person name="Feldmann K.A."/>
        </authorList>
    </citation>
    <scope>NUCLEOTIDE SEQUENCE [LARGE SCALE MRNA]</scope>
</reference>
<reference key="6">
    <citation type="journal article" date="2006" name="Plant Physiol.">
        <title>Genome-wide analysis of the ERF gene family in Arabidopsis and rice.</title>
        <authorList>
            <person name="Nakano T."/>
            <person name="Suzuki K."/>
            <person name="Fujimura T."/>
            <person name="Shinshi H."/>
        </authorList>
    </citation>
    <scope>GENE FAMILY</scope>
    <scope>NOMENCLATURE</scope>
</reference>
<proteinExistence type="evidence at protein level"/>
<keyword id="KW-0238">DNA-binding</keyword>
<keyword id="KW-0936">Ethylene signaling pathway</keyword>
<keyword id="KW-0539">Nucleus</keyword>
<keyword id="KW-1185">Reference proteome</keyword>
<keyword id="KW-0678">Repressor</keyword>
<keyword id="KW-0804">Transcription</keyword>
<keyword id="KW-0805">Transcription regulation</keyword>
<feature type="chain" id="PRO_0000112561" description="Ethylene-responsive transcription factor 11">
    <location>
        <begin position="1"/>
        <end position="166"/>
    </location>
</feature>
<feature type="DNA-binding region" description="AP2/ERF" evidence="2">
    <location>
        <begin position="19"/>
        <end position="76"/>
    </location>
</feature>
<feature type="short sequence motif" description="EAR-like (transcriptional repression)">
    <location>
        <begin position="156"/>
        <end position="162"/>
    </location>
</feature>